<comment type="similarity">
    <text evidence="1">Belongs to the universal ribosomal protein uS9 family.</text>
</comment>
<sequence length="130" mass="14673">MAKVQYFGTGRRKKSVARVRLVAGDGKVIINNRDIENYFPIETLRVIVNQPLVLTETKDKYDVLVNVHGGGFTGQAGAVRHGISRALVKADENMKSSLKKAGFLTRDPRMKERKKYGLKKARRSPQFSKR</sequence>
<evidence type="ECO:0000255" key="1">
    <source>
        <dbReference type="HAMAP-Rule" id="MF_00532"/>
    </source>
</evidence>
<evidence type="ECO:0000256" key="2">
    <source>
        <dbReference type="SAM" id="MobiDB-lite"/>
    </source>
</evidence>
<evidence type="ECO:0000305" key="3"/>
<reference key="1">
    <citation type="submission" date="2008-05" db="EMBL/GenBank/DDBJ databases">
        <title>Genome sequence of Clostridium botulinum Ba4 strain 657.</title>
        <authorList>
            <person name="Shrivastava S."/>
            <person name="Brown J.L."/>
            <person name="Bruce D."/>
            <person name="Detter C."/>
            <person name="Munk C."/>
            <person name="Smith L.A."/>
            <person name="Smith T.J."/>
            <person name="Sutton G."/>
            <person name="Brettin T.S."/>
        </authorList>
    </citation>
    <scope>NUCLEOTIDE SEQUENCE [LARGE SCALE GENOMIC DNA]</scope>
    <source>
        <strain>657 / Type Ba4</strain>
    </source>
</reference>
<proteinExistence type="inferred from homology"/>
<protein>
    <recommendedName>
        <fullName evidence="1">Small ribosomal subunit protein uS9</fullName>
    </recommendedName>
    <alternativeName>
        <fullName evidence="3">30S ribosomal protein S9</fullName>
    </alternativeName>
</protein>
<organism>
    <name type="scientific">Clostridium botulinum (strain 657 / Type Ba4)</name>
    <dbReference type="NCBI Taxonomy" id="515621"/>
    <lineage>
        <taxon>Bacteria</taxon>
        <taxon>Bacillati</taxon>
        <taxon>Bacillota</taxon>
        <taxon>Clostridia</taxon>
        <taxon>Eubacteriales</taxon>
        <taxon>Clostridiaceae</taxon>
        <taxon>Clostridium</taxon>
    </lineage>
</organism>
<gene>
    <name evidence="1" type="primary">rpsI</name>
    <name type="ordered locus">CLJ_B3753</name>
</gene>
<accession>C3KVL5</accession>
<dbReference type="EMBL" id="CP001083">
    <property type="protein sequence ID" value="ACQ52009.1"/>
    <property type="molecule type" value="Genomic_DNA"/>
</dbReference>
<dbReference type="RefSeq" id="WP_003357662.1">
    <property type="nucleotide sequence ID" value="NC_012658.1"/>
</dbReference>
<dbReference type="SMR" id="C3KVL5"/>
<dbReference type="GeneID" id="5184277"/>
<dbReference type="KEGG" id="cbi:CLJ_B3753"/>
<dbReference type="HOGENOM" id="CLU_046483_2_1_9"/>
<dbReference type="Proteomes" id="UP000002333">
    <property type="component" value="Chromosome"/>
</dbReference>
<dbReference type="GO" id="GO:0022627">
    <property type="term" value="C:cytosolic small ribosomal subunit"/>
    <property type="evidence" value="ECO:0007669"/>
    <property type="project" value="TreeGrafter"/>
</dbReference>
<dbReference type="GO" id="GO:0003723">
    <property type="term" value="F:RNA binding"/>
    <property type="evidence" value="ECO:0007669"/>
    <property type="project" value="TreeGrafter"/>
</dbReference>
<dbReference type="GO" id="GO:0003735">
    <property type="term" value="F:structural constituent of ribosome"/>
    <property type="evidence" value="ECO:0007669"/>
    <property type="project" value="InterPro"/>
</dbReference>
<dbReference type="GO" id="GO:0006412">
    <property type="term" value="P:translation"/>
    <property type="evidence" value="ECO:0007669"/>
    <property type="project" value="UniProtKB-UniRule"/>
</dbReference>
<dbReference type="FunFam" id="3.30.230.10:FF:000001">
    <property type="entry name" value="30S ribosomal protein S9"/>
    <property type="match status" value="1"/>
</dbReference>
<dbReference type="Gene3D" id="3.30.230.10">
    <property type="match status" value="1"/>
</dbReference>
<dbReference type="HAMAP" id="MF_00532_B">
    <property type="entry name" value="Ribosomal_uS9_B"/>
    <property type="match status" value="1"/>
</dbReference>
<dbReference type="InterPro" id="IPR020568">
    <property type="entry name" value="Ribosomal_Su5_D2-typ_SF"/>
</dbReference>
<dbReference type="InterPro" id="IPR000754">
    <property type="entry name" value="Ribosomal_uS9"/>
</dbReference>
<dbReference type="InterPro" id="IPR023035">
    <property type="entry name" value="Ribosomal_uS9_bac/plastid"/>
</dbReference>
<dbReference type="InterPro" id="IPR020574">
    <property type="entry name" value="Ribosomal_uS9_CS"/>
</dbReference>
<dbReference type="InterPro" id="IPR014721">
    <property type="entry name" value="Ribsml_uS5_D2-typ_fold_subgr"/>
</dbReference>
<dbReference type="NCBIfam" id="NF001099">
    <property type="entry name" value="PRK00132.1"/>
    <property type="match status" value="1"/>
</dbReference>
<dbReference type="PANTHER" id="PTHR21569">
    <property type="entry name" value="RIBOSOMAL PROTEIN S9"/>
    <property type="match status" value="1"/>
</dbReference>
<dbReference type="PANTHER" id="PTHR21569:SF1">
    <property type="entry name" value="SMALL RIBOSOMAL SUBUNIT PROTEIN US9M"/>
    <property type="match status" value="1"/>
</dbReference>
<dbReference type="Pfam" id="PF00380">
    <property type="entry name" value="Ribosomal_S9"/>
    <property type="match status" value="1"/>
</dbReference>
<dbReference type="SUPFAM" id="SSF54211">
    <property type="entry name" value="Ribosomal protein S5 domain 2-like"/>
    <property type="match status" value="1"/>
</dbReference>
<dbReference type="PROSITE" id="PS00360">
    <property type="entry name" value="RIBOSOMAL_S9"/>
    <property type="match status" value="1"/>
</dbReference>
<keyword id="KW-0687">Ribonucleoprotein</keyword>
<keyword id="KW-0689">Ribosomal protein</keyword>
<name>RS9_CLOB6</name>
<feature type="chain" id="PRO_1000211827" description="Small ribosomal subunit protein uS9">
    <location>
        <begin position="1"/>
        <end position="130"/>
    </location>
</feature>
<feature type="region of interest" description="Disordered" evidence="2">
    <location>
        <begin position="102"/>
        <end position="130"/>
    </location>
</feature>
<feature type="compositionally biased region" description="Basic residues" evidence="2">
    <location>
        <begin position="111"/>
        <end position="130"/>
    </location>
</feature>